<evidence type="ECO:0000255" key="1">
    <source>
        <dbReference type="HAMAP-Rule" id="MF_01550"/>
    </source>
</evidence>
<protein>
    <recommendedName>
        <fullName evidence="1">Guanosine-5'-triphosphate,3'-diphosphate pyrophosphatase</fullName>
        <ecNumber evidence="1">3.6.1.40</ecNumber>
    </recommendedName>
    <alternativeName>
        <fullName evidence="1">Guanosine pentaphosphate phosphohydrolase</fullName>
    </alternativeName>
    <alternativeName>
        <fullName evidence="1">pppGpp-5'-phosphohydrolase</fullName>
    </alternativeName>
</protein>
<reference key="1">
    <citation type="journal article" date="2005" name="Nucleic Acids Res.">
        <title>Genome dynamics and diversity of Shigella species, the etiologic agents of bacillary dysentery.</title>
        <authorList>
            <person name="Yang F."/>
            <person name="Yang J."/>
            <person name="Zhang X."/>
            <person name="Chen L."/>
            <person name="Jiang Y."/>
            <person name="Yan Y."/>
            <person name="Tang X."/>
            <person name="Wang J."/>
            <person name="Xiong Z."/>
            <person name="Dong J."/>
            <person name="Xue Y."/>
            <person name="Zhu Y."/>
            <person name="Xu X."/>
            <person name="Sun L."/>
            <person name="Chen S."/>
            <person name="Nie H."/>
            <person name="Peng J."/>
            <person name="Xu J."/>
            <person name="Wang Y."/>
            <person name="Yuan Z."/>
            <person name="Wen Y."/>
            <person name="Yao Z."/>
            <person name="Shen Y."/>
            <person name="Qiang B."/>
            <person name="Hou Y."/>
            <person name="Yu J."/>
            <person name="Jin Q."/>
        </authorList>
    </citation>
    <scope>NUCLEOTIDE SEQUENCE [LARGE SCALE GENOMIC DNA]</scope>
    <source>
        <strain>Sd197</strain>
    </source>
</reference>
<dbReference type="EC" id="3.6.1.40" evidence="1"/>
<dbReference type="EMBL" id="CP000034">
    <property type="protein sequence ID" value="ABB63898.1"/>
    <property type="molecule type" value="Genomic_DNA"/>
</dbReference>
<dbReference type="RefSeq" id="WP_005016883.1">
    <property type="nucleotide sequence ID" value="NC_007606.1"/>
</dbReference>
<dbReference type="RefSeq" id="YP_405389.1">
    <property type="nucleotide sequence ID" value="NC_007606.1"/>
</dbReference>
<dbReference type="SMR" id="Q329V7"/>
<dbReference type="STRING" id="300267.SDY_3970"/>
<dbReference type="EnsemblBacteria" id="ABB63898">
    <property type="protein sequence ID" value="ABB63898"/>
    <property type="gene ID" value="SDY_3970"/>
</dbReference>
<dbReference type="KEGG" id="sdy:SDY_3970"/>
<dbReference type="PATRIC" id="fig|300267.13.peg.4681"/>
<dbReference type="HOGENOM" id="CLU_025908_4_0_6"/>
<dbReference type="UniPathway" id="UPA00908">
    <property type="reaction ID" value="UER00885"/>
</dbReference>
<dbReference type="Proteomes" id="UP000002716">
    <property type="component" value="Chromosome"/>
</dbReference>
<dbReference type="GO" id="GO:0008894">
    <property type="term" value="F:guanosine-5'-triphosphate,3'-diphosphate diphosphatase activity"/>
    <property type="evidence" value="ECO:0007669"/>
    <property type="project" value="UniProtKB-UniRule"/>
</dbReference>
<dbReference type="GO" id="GO:0015974">
    <property type="term" value="P:guanosine pentaphosphate catabolic process"/>
    <property type="evidence" value="ECO:0007669"/>
    <property type="project" value="InterPro"/>
</dbReference>
<dbReference type="GO" id="GO:0015970">
    <property type="term" value="P:guanosine tetraphosphate biosynthetic process"/>
    <property type="evidence" value="ECO:0007669"/>
    <property type="project" value="UniProtKB-UniRule"/>
</dbReference>
<dbReference type="GO" id="GO:0015949">
    <property type="term" value="P:nucleobase-containing small molecule interconversion"/>
    <property type="evidence" value="ECO:0007669"/>
    <property type="project" value="TreeGrafter"/>
</dbReference>
<dbReference type="CDD" id="cd24117">
    <property type="entry name" value="ASKHA_NBD_EcGppA-like"/>
    <property type="match status" value="1"/>
</dbReference>
<dbReference type="FunFam" id="1.10.3210.10:FF:000004">
    <property type="entry name" value="Guanosine-5'-triphosphate,3'-diphosphate pyrophosphatase"/>
    <property type="match status" value="1"/>
</dbReference>
<dbReference type="FunFam" id="3.30.420.150:FF:000001">
    <property type="entry name" value="Guanosine-5'-triphosphate,3'-diphosphate pyrophosphatase"/>
    <property type="match status" value="1"/>
</dbReference>
<dbReference type="FunFam" id="3.30.420.40:FF:000023">
    <property type="entry name" value="Guanosine-5'-triphosphate,3'-diphosphate pyrophosphatase"/>
    <property type="match status" value="1"/>
</dbReference>
<dbReference type="Gene3D" id="3.30.420.40">
    <property type="match status" value="1"/>
</dbReference>
<dbReference type="Gene3D" id="3.30.420.150">
    <property type="entry name" value="Exopolyphosphatase. Domain 2"/>
    <property type="match status" value="1"/>
</dbReference>
<dbReference type="Gene3D" id="1.10.3210.10">
    <property type="entry name" value="Hypothetical protein af1432"/>
    <property type="match status" value="1"/>
</dbReference>
<dbReference type="HAMAP" id="MF_01550">
    <property type="entry name" value="GppA"/>
    <property type="match status" value="1"/>
</dbReference>
<dbReference type="InterPro" id="IPR043129">
    <property type="entry name" value="ATPase_NBD"/>
</dbReference>
<dbReference type="InterPro" id="IPR050273">
    <property type="entry name" value="GppA/Ppx_hydrolase"/>
</dbReference>
<dbReference type="InterPro" id="IPR023709">
    <property type="entry name" value="Guo-5TP_3DP_PyrP"/>
</dbReference>
<dbReference type="InterPro" id="IPR048950">
    <property type="entry name" value="Ppx_GppA_C"/>
</dbReference>
<dbReference type="InterPro" id="IPR003695">
    <property type="entry name" value="Ppx_GppA_N"/>
</dbReference>
<dbReference type="InterPro" id="IPR030673">
    <property type="entry name" value="PyroPPase_GppA_Ppx"/>
</dbReference>
<dbReference type="NCBIfam" id="NF008260">
    <property type="entry name" value="PRK11031.1"/>
    <property type="match status" value="1"/>
</dbReference>
<dbReference type="PANTHER" id="PTHR30005">
    <property type="entry name" value="EXOPOLYPHOSPHATASE"/>
    <property type="match status" value="1"/>
</dbReference>
<dbReference type="PANTHER" id="PTHR30005:SF0">
    <property type="entry name" value="RETROGRADE REGULATION PROTEIN 2"/>
    <property type="match status" value="1"/>
</dbReference>
<dbReference type="Pfam" id="PF02541">
    <property type="entry name" value="Ppx-GppA"/>
    <property type="match status" value="1"/>
</dbReference>
<dbReference type="Pfam" id="PF21447">
    <property type="entry name" value="Ppx-GppA_III"/>
    <property type="match status" value="1"/>
</dbReference>
<dbReference type="PIRSF" id="PIRSF001267">
    <property type="entry name" value="Pyrophosphatase_GppA_Ppx"/>
    <property type="match status" value="1"/>
</dbReference>
<dbReference type="SUPFAM" id="SSF53067">
    <property type="entry name" value="Actin-like ATPase domain"/>
    <property type="match status" value="2"/>
</dbReference>
<dbReference type="SUPFAM" id="SSF109604">
    <property type="entry name" value="HD-domain/PDEase-like"/>
    <property type="match status" value="1"/>
</dbReference>
<keyword id="KW-0378">Hydrolase</keyword>
<keyword id="KW-1185">Reference proteome</keyword>
<name>GPPA_SHIDS</name>
<gene>
    <name evidence="1" type="primary">gppA</name>
    <name type="ordered locus">SDY_3970</name>
</gene>
<accession>Q329V7</accession>
<sequence length="494" mass="54945">MGSTSSLYAAIDLGSNSFHMLVVREVAGSIQTLTRIKRKVRLAAGLNSENALSNEAMERGWQCLRLFAERLQDIPPSQIRVVATATLRLAVNAGDFIAKAQEILGCPVQVISGEEEARLIYQGVAHTTGGADQRLVVDIGGASTELVTGTGAQTTSLFSLSMGCVTWLERYFADRNLGQENFDAAEKAAREVLRPIADELRYHGWKVCVGASGTVQALQEIMMAQGMDERITLEKLQQLKQRAIHCGRLEELEIDGLTLERALVFPSGLAILIAIFTELNIQYMTLAGGALREGLVYGMLHLAVEQDIRSRTLRNIQRRFMIDIDQAQRVAKVAANFFDQVENEWHLEAISRDLLISACQLHEIGLSVDFKQAPQHAAYLVRNLDLPGFTPAQKKLLATLLLNQTNPVDLSSLHQQNAVPPRVAEQLCRLLRLAIIFASRRRDDLVPEMTLQANHELLTLTLPQGWLTQHPLGKEIIAQESQWQSYVHWPLEVH</sequence>
<feature type="chain" id="PRO_0000314498" description="Guanosine-5'-triphosphate,3'-diphosphate pyrophosphatase">
    <location>
        <begin position="1"/>
        <end position="494"/>
    </location>
</feature>
<proteinExistence type="inferred from homology"/>
<comment type="function">
    <text evidence="1">Catalyzes the conversion of pppGpp to ppGpp. Guanosine pentaphosphate (pppGpp) is a cytoplasmic signaling molecule which together with ppGpp controls the 'stringent response', an adaptive process that allows bacteria to respond to amino acid starvation, resulting in the coordinated regulation of numerous cellular activities.</text>
</comment>
<comment type="catalytic activity">
    <reaction evidence="1">
        <text>guanosine 3'-diphosphate 5'-triphosphate + H2O = guanosine 3',5'-bis(diphosphate) + phosphate + H(+)</text>
        <dbReference type="Rhea" id="RHEA:13073"/>
        <dbReference type="ChEBI" id="CHEBI:15377"/>
        <dbReference type="ChEBI" id="CHEBI:15378"/>
        <dbReference type="ChEBI" id="CHEBI:43474"/>
        <dbReference type="ChEBI" id="CHEBI:77828"/>
        <dbReference type="ChEBI" id="CHEBI:142410"/>
        <dbReference type="EC" id="3.6.1.40"/>
    </reaction>
</comment>
<comment type="pathway">
    <text evidence="1">Purine metabolism; ppGpp biosynthesis; ppGpp from GTP: step 2/2.</text>
</comment>
<comment type="similarity">
    <text evidence="1">Belongs to the GppA/Ppx family. GppA subfamily.</text>
</comment>
<organism>
    <name type="scientific">Shigella dysenteriae serotype 1 (strain Sd197)</name>
    <dbReference type="NCBI Taxonomy" id="300267"/>
    <lineage>
        <taxon>Bacteria</taxon>
        <taxon>Pseudomonadati</taxon>
        <taxon>Pseudomonadota</taxon>
        <taxon>Gammaproteobacteria</taxon>
        <taxon>Enterobacterales</taxon>
        <taxon>Enterobacteriaceae</taxon>
        <taxon>Shigella</taxon>
    </lineage>
</organism>